<dbReference type="EC" id="4.1.1.22"/>
<dbReference type="EMBL" id="J02577">
    <property type="protein sequence ID" value="AAA25321.1"/>
    <property type="molecule type" value="Genomic_DNA"/>
</dbReference>
<dbReference type="PIR" id="A25013">
    <property type="entry name" value="A25013"/>
</dbReference>
<dbReference type="RefSeq" id="WP_072869018.1">
    <property type="nucleotide sequence ID" value="NZ_CAXOOS010000003.1"/>
</dbReference>
<dbReference type="SMR" id="P05034"/>
<dbReference type="BRENDA" id="4.1.1.22">
    <property type="organism ID" value="3426"/>
</dbReference>
<dbReference type="SABIO-RK" id="P05034"/>
<dbReference type="GO" id="GO:0004398">
    <property type="term" value="F:histidine decarboxylase activity"/>
    <property type="evidence" value="ECO:0007669"/>
    <property type="project" value="UniProtKB-UniRule"/>
</dbReference>
<dbReference type="GO" id="GO:0030170">
    <property type="term" value="F:pyridoxal phosphate binding"/>
    <property type="evidence" value="ECO:0007669"/>
    <property type="project" value="InterPro"/>
</dbReference>
<dbReference type="GO" id="GO:0019752">
    <property type="term" value="P:carboxylic acid metabolic process"/>
    <property type="evidence" value="ECO:0007669"/>
    <property type="project" value="InterPro"/>
</dbReference>
<dbReference type="Gene3D" id="3.40.640.10">
    <property type="entry name" value="Type I PLP-dependent aspartate aminotransferase-like (Major domain)"/>
    <property type="match status" value="1"/>
</dbReference>
<dbReference type="HAMAP" id="MF_00609">
    <property type="entry name" value="Pyridoxal_decarbox"/>
    <property type="match status" value="1"/>
</dbReference>
<dbReference type="InterPro" id="IPR051151">
    <property type="entry name" value="Group_II_Decarboxylase"/>
</dbReference>
<dbReference type="InterPro" id="IPR023523">
    <property type="entry name" value="Hist_deCOase_bac"/>
</dbReference>
<dbReference type="InterPro" id="IPR002129">
    <property type="entry name" value="PyrdxlP-dep_de-COase"/>
</dbReference>
<dbReference type="InterPro" id="IPR015424">
    <property type="entry name" value="PyrdxlP-dep_Trfase"/>
</dbReference>
<dbReference type="InterPro" id="IPR015421">
    <property type="entry name" value="PyrdxlP-dep_Trfase_major"/>
</dbReference>
<dbReference type="InterPro" id="IPR021115">
    <property type="entry name" value="Pyridoxal-P_BS"/>
</dbReference>
<dbReference type="NCBIfam" id="NF002748">
    <property type="entry name" value="PRK02769.1"/>
    <property type="match status" value="1"/>
</dbReference>
<dbReference type="PANTHER" id="PTHR46101">
    <property type="match status" value="1"/>
</dbReference>
<dbReference type="PANTHER" id="PTHR46101:SF2">
    <property type="entry name" value="SERINE DECARBOXYLASE"/>
    <property type="match status" value="1"/>
</dbReference>
<dbReference type="Pfam" id="PF00282">
    <property type="entry name" value="Pyridoxal_deC"/>
    <property type="match status" value="1"/>
</dbReference>
<dbReference type="SUPFAM" id="SSF53383">
    <property type="entry name" value="PLP-dependent transferases"/>
    <property type="match status" value="1"/>
</dbReference>
<dbReference type="PROSITE" id="PS00392">
    <property type="entry name" value="DDC_GAD_HDC_YDC"/>
    <property type="match status" value="1"/>
</dbReference>
<comment type="catalytic activity">
    <reaction evidence="3">
        <text>L-histidine + H(+) = histamine + CO2</text>
        <dbReference type="Rhea" id="RHEA:20840"/>
        <dbReference type="ChEBI" id="CHEBI:15378"/>
        <dbReference type="ChEBI" id="CHEBI:16526"/>
        <dbReference type="ChEBI" id="CHEBI:57595"/>
        <dbReference type="ChEBI" id="CHEBI:58432"/>
        <dbReference type="EC" id="4.1.1.22"/>
    </reaction>
</comment>
<comment type="cofactor">
    <cofactor evidence="3">
        <name>pyridoxal 5'-phosphate</name>
        <dbReference type="ChEBI" id="CHEBI:597326"/>
    </cofactor>
</comment>
<comment type="subunit">
    <text>Homotetramer.</text>
</comment>
<comment type="similarity">
    <text evidence="4">Belongs to the group II decarboxylase family.</text>
</comment>
<name>DCHS_MORMO</name>
<evidence type="ECO:0000250" key="1"/>
<evidence type="ECO:0000255" key="2"/>
<evidence type="ECO:0000269" key="3">
    <source>
    </source>
</evidence>
<evidence type="ECO:0000305" key="4"/>
<reference key="1">
    <citation type="journal article" date="1986" name="J. Biol. Chem.">
        <title>Pyridoxal 5'-phosphate-dependent histidine decarboxylase. Nucleotide sequence of the hdc gene and the corresponding amino acid sequence.</title>
        <authorList>
            <person name="Vaaler G.L."/>
            <person name="Brasch M.A."/>
            <person name="Snell E.E."/>
        </authorList>
    </citation>
    <scope>NUCLEOTIDE SEQUENCE [GENOMIC DNA]</scope>
    <source>
        <strain>AM-15C</strain>
    </source>
</reference>
<reference key="2">
    <citation type="journal article" date="1986" name="J. Biol. Chem.">
        <title>Pyridoxal 5'-phosphate-dependent histidine decarboxylase. Inactivation by alpha-fluoromethylhistidine and comparative sequences at the inhibitor- and coenzyme-binding sites.</title>
        <authorList>
            <person name="Hayashi H."/>
            <person name="Tanase S."/>
            <person name="Snell E.E."/>
        </authorList>
    </citation>
    <scope>PROTEIN SEQUENCE OF 233-247 AND 322-334</scope>
    <scope>CATALYTIC ACTIVITY</scope>
    <scope>COFACTOR</scope>
    <scope>PUTATIVE ACTIVE SITE</scope>
</reference>
<feature type="initiator methionine" description="Removed">
    <location>
        <position position="1"/>
    </location>
</feature>
<feature type="chain" id="PRO_0000146958" description="Histidine decarboxylase">
    <location>
        <begin position="2"/>
        <end position="378"/>
    </location>
</feature>
<feature type="active site" evidence="2">
    <location>
        <position position="323"/>
    </location>
</feature>
<feature type="binding site" evidence="1">
    <location>
        <position position="120"/>
    </location>
    <ligand>
        <name>substrate</name>
    </ligand>
</feature>
<feature type="modified residue" description="N6-(pyridoxal phosphate)lysine">
    <location>
        <position position="233"/>
    </location>
</feature>
<keyword id="KW-0210">Decarboxylase</keyword>
<keyword id="KW-0903">Direct protein sequencing</keyword>
<keyword id="KW-0456">Lyase</keyword>
<keyword id="KW-0663">Pyridoxal phosphate</keyword>
<gene>
    <name type="primary">hdc</name>
</gene>
<organism>
    <name type="scientific">Morganella morganii</name>
    <name type="common">Proteus morganii</name>
    <dbReference type="NCBI Taxonomy" id="582"/>
    <lineage>
        <taxon>Bacteria</taxon>
        <taxon>Pseudomonadati</taxon>
        <taxon>Pseudomonadota</taxon>
        <taxon>Gammaproteobacteria</taxon>
        <taxon>Enterobacterales</taxon>
        <taxon>Morganellaceae</taxon>
        <taxon>Morganella</taxon>
    </lineage>
</organism>
<sequence length="378" mass="42875">MTLSINDQNKLDAFWAYCVKNQYFNIGYPESADFDYTNLERFLRFSINNCGDWGEYCNYLLNSFDFEKEVMEYFADLFKIPFEQSWGYVTNGGTEGNMFGCYLGREIFPDGTLYYSKDTHYSVAKIVKLLRIKSQVVESQPNGEIDYDDLMKKIADDKEAHPIIFANIGTTVRGAIDDIAEIQKRLKAAGIKREDYYLHADAALSGMILPFVDDAQPFTFADGIDSIGVSGHKMIGSPIPCGIVVAKKENVDRISVEIDYISAHDKTITGSRNGHTPLMLWEAIRSHSTEEWKRRITRSLDMAQYAVDRMQKAGINAWRNKNSITVVFPCPSERVWREHCLATSGDVAHLITTAHHLDTVQIDKLIDDVIADFNLHAA</sequence>
<proteinExistence type="evidence at protein level"/>
<accession>P05034</accession>
<protein>
    <recommendedName>
        <fullName>Histidine decarboxylase</fullName>
        <shortName>HDC</shortName>
        <ecNumber>4.1.1.22</ecNumber>
    </recommendedName>
</protein>